<dbReference type="EC" id="6.3.3.1" evidence="1"/>
<dbReference type="EMBL" id="CP000127">
    <property type="protein sequence ID" value="ABA57684.1"/>
    <property type="molecule type" value="Genomic_DNA"/>
</dbReference>
<dbReference type="RefSeq" id="WP_002811198.1">
    <property type="nucleotide sequence ID" value="NC_007484.1"/>
</dbReference>
<dbReference type="SMR" id="Q3JBW2"/>
<dbReference type="FunCoup" id="Q3JBW2">
    <property type="interactions" value="537"/>
</dbReference>
<dbReference type="STRING" id="323261.Noc_1182"/>
<dbReference type="KEGG" id="noc:Noc_1182"/>
<dbReference type="eggNOG" id="COG0150">
    <property type="taxonomic scope" value="Bacteria"/>
</dbReference>
<dbReference type="HOGENOM" id="CLU_047116_0_0_6"/>
<dbReference type="InParanoid" id="Q3JBW2"/>
<dbReference type="UniPathway" id="UPA00074">
    <property type="reaction ID" value="UER00129"/>
</dbReference>
<dbReference type="Proteomes" id="UP000006838">
    <property type="component" value="Chromosome"/>
</dbReference>
<dbReference type="GO" id="GO:0005829">
    <property type="term" value="C:cytosol"/>
    <property type="evidence" value="ECO:0007669"/>
    <property type="project" value="TreeGrafter"/>
</dbReference>
<dbReference type="GO" id="GO:0005524">
    <property type="term" value="F:ATP binding"/>
    <property type="evidence" value="ECO:0007669"/>
    <property type="project" value="UniProtKB-KW"/>
</dbReference>
<dbReference type="GO" id="GO:0004637">
    <property type="term" value="F:phosphoribosylamine-glycine ligase activity"/>
    <property type="evidence" value="ECO:0007669"/>
    <property type="project" value="TreeGrafter"/>
</dbReference>
<dbReference type="GO" id="GO:0004641">
    <property type="term" value="F:phosphoribosylformylglycinamidine cyclo-ligase activity"/>
    <property type="evidence" value="ECO:0007669"/>
    <property type="project" value="UniProtKB-UniRule"/>
</dbReference>
<dbReference type="GO" id="GO:0006189">
    <property type="term" value="P:'de novo' IMP biosynthetic process"/>
    <property type="evidence" value="ECO:0007669"/>
    <property type="project" value="UniProtKB-UniRule"/>
</dbReference>
<dbReference type="GO" id="GO:0046084">
    <property type="term" value="P:adenine biosynthetic process"/>
    <property type="evidence" value="ECO:0007669"/>
    <property type="project" value="TreeGrafter"/>
</dbReference>
<dbReference type="CDD" id="cd02196">
    <property type="entry name" value="PurM"/>
    <property type="match status" value="1"/>
</dbReference>
<dbReference type="FunFam" id="3.30.1330.10:FF:000001">
    <property type="entry name" value="Phosphoribosylformylglycinamidine cyclo-ligase"/>
    <property type="match status" value="1"/>
</dbReference>
<dbReference type="FunFam" id="3.90.650.10:FF:000001">
    <property type="entry name" value="Phosphoribosylformylglycinamidine cyclo-ligase"/>
    <property type="match status" value="1"/>
</dbReference>
<dbReference type="Gene3D" id="3.90.650.10">
    <property type="entry name" value="PurM-like C-terminal domain"/>
    <property type="match status" value="1"/>
</dbReference>
<dbReference type="Gene3D" id="3.30.1330.10">
    <property type="entry name" value="PurM-like, N-terminal domain"/>
    <property type="match status" value="1"/>
</dbReference>
<dbReference type="HAMAP" id="MF_00741">
    <property type="entry name" value="AIRS"/>
    <property type="match status" value="1"/>
</dbReference>
<dbReference type="InterPro" id="IPR010918">
    <property type="entry name" value="PurM-like_C_dom"/>
</dbReference>
<dbReference type="InterPro" id="IPR036676">
    <property type="entry name" value="PurM-like_C_sf"/>
</dbReference>
<dbReference type="InterPro" id="IPR016188">
    <property type="entry name" value="PurM-like_N"/>
</dbReference>
<dbReference type="InterPro" id="IPR036921">
    <property type="entry name" value="PurM-like_N_sf"/>
</dbReference>
<dbReference type="InterPro" id="IPR004733">
    <property type="entry name" value="PurM_cligase"/>
</dbReference>
<dbReference type="NCBIfam" id="TIGR00878">
    <property type="entry name" value="purM"/>
    <property type="match status" value="1"/>
</dbReference>
<dbReference type="PANTHER" id="PTHR10520:SF12">
    <property type="entry name" value="TRIFUNCTIONAL PURINE BIOSYNTHETIC PROTEIN ADENOSINE-3"/>
    <property type="match status" value="1"/>
</dbReference>
<dbReference type="PANTHER" id="PTHR10520">
    <property type="entry name" value="TRIFUNCTIONAL PURINE BIOSYNTHETIC PROTEIN ADENOSINE-3-RELATED"/>
    <property type="match status" value="1"/>
</dbReference>
<dbReference type="Pfam" id="PF00586">
    <property type="entry name" value="AIRS"/>
    <property type="match status" value="1"/>
</dbReference>
<dbReference type="Pfam" id="PF02769">
    <property type="entry name" value="AIRS_C"/>
    <property type="match status" value="1"/>
</dbReference>
<dbReference type="SUPFAM" id="SSF56042">
    <property type="entry name" value="PurM C-terminal domain-like"/>
    <property type="match status" value="1"/>
</dbReference>
<dbReference type="SUPFAM" id="SSF55326">
    <property type="entry name" value="PurM N-terminal domain-like"/>
    <property type="match status" value="1"/>
</dbReference>
<comment type="catalytic activity">
    <reaction evidence="1">
        <text>2-formamido-N(1)-(5-O-phospho-beta-D-ribosyl)acetamidine + ATP = 5-amino-1-(5-phospho-beta-D-ribosyl)imidazole + ADP + phosphate + H(+)</text>
        <dbReference type="Rhea" id="RHEA:23032"/>
        <dbReference type="ChEBI" id="CHEBI:15378"/>
        <dbReference type="ChEBI" id="CHEBI:30616"/>
        <dbReference type="ChEBI" id="CHEBI:43474"/>
        <dbReference type="ChEBI" id="CHEBI:137981"/>
        <dbReference type="ChEBI" id="CHEBI:147287"/>
        <dbReference type="ChEBI" id="CHEBI:456216"/>
        <dbReference type="EC" id="6.3.3.1"/>
    </reaction>
</comment>
<comment type="pathway">
    <text evidence="1">Purine metabolism; IMP biosynthesis via de novo pathway; 5-amino-1-(5-phospho-D-ribosyl)imidazole from N(2)-formyl-N(1)-(5-phospho-D-ribosyl)glycinamide: step 2/2.</text>
</comment>
<comment type="subcellular location">
    <subcellularLocation>
        <location evidence="1">Cytoplasm</location>
    </subcellularLocation>
</comment>
<comment type="similarity">
    <text evidence="1">Belongs to the AIR synthase family.</text>
</comment>
<feature type="chain" id="PRO_0000258374" description="Phosphoribosylformylglycinamidine cyclo-ligase">
    <location>
        <begin position="1"/>
        <end position="358"/>
    </location>
</feature>
<accession>Q3JBW2</accession>
<reference key="1">
    <citation type="journal article" date="2006" name="Appl. Environ. Microbiol.">
        <title>Complete genome sequence of the marine, chemolithoautotrophic, ammonia-oxidizing bacterium Nitrosococcus oceani ATCC 19707.</title>
        <authorList>
            <person name="Klotz M.G."/>
            <person name="Arp D.J."/>
            <person name="Chain P.S.G."/>
            <person name="El-Sheikh A.F."/>
            <person name="Hauser L.J."/>
            <person name="Hommes N.G."/>
            <person name="Larimer F.W."/>
            <person name="Malfatti S.A."/>
            <person name="Norton J.M."/>
            <person name="Poret-Peterson A.T."/>
            <person name="Vergez L.M."/>
            <person name="Ward B.B."/>
        </authorList>
    </citation>
    <scope>NUCLEOTIDE SEQUENCE [LARGE SCALE GENOMIC DNA]</scope>
    <source>
        <strain>ATCC 19707 / BCRC 17464 / JCM 30415 / NCIMB 11848 / C-107</strain>
    </source>
</reference>
<organism>
    <name type="scientific">Nitrosococcus oceani (strain ATCC 19707 / BCRC 17464 / JCM 30415 / NCIMB 11848 / C-107)</name>
    <dbReference type="NCBI Taxonomy" id="323261"/>
    <lineage>
        <taxon>Bacteria</taxon>
        <taxon>Pseudomonadati</taxon>
        <taxon>Pseudomonadota</taxon>
        <taxon>Gammaproteobacteria</taxon>
        <taxon>Chromatiales</taxon>
        <taxon>Chromatiaceae</taxon>
        <taxon>Nitrosococcus</taxon>
    </lineage>
</organism>
<sequence length="358" mass="38748">MSKKKLPPSSHSPLSYRDAGVDIDAGNQLIQRIKPAANRTTRPGVLTSLGGFGSLFELPIHRYQHPVLVAGTDGVGTKLKLAIQLNRHDSIGIDLVAMCANDIIVQGAEPLFFLDYYATGRLEVDIAAEIIEGIAHGCELAGVALVGGETAEMPGIYQAGDYDLAGFCVGVVEKERLIDGSQVQAGDHLIGIASSGPHANGYSLIRKILERSRYSLNSPLADQTLGDALLTPTRIYVKPLLQLLEVIEIHALAHITGGGLPENLPRVLPPMLSAEIDTSRWPRLPIFDWLQREGNLSEQELYRTFNCGIGMVVCVDQADTEQALEFLKDRGESAWLIGRIVPQTSDGQRVAFNTGNPL</sequence>
<proteinExistence type="inferred from homology"/>
<protein>
    <recommendedName>
        <fullName evidence="1">Phosphoribosylformylglycinamidine cyclo-ligase</fullName>
        <ecNumber evidence="1">6.3.3.1</ecNumber>
    </recommendedName>
    <alternativeName>
        <fullName evidence="1">AIR synthase</fullName>
    </alternativeName>
    <alternativeName>
        <fullName evidence="1">AIRS</fullName>
    </alternativeName>
    <alternativeName>
        <fullName evidence="1">Phosphoribosyl-aminoimidazole synthetase</fullName>
    </alternativeName>
</protein>
<evidence type="ECO:0000255" key="1">
    <source>
        <dbReference type="HAMAP-Rule" id="MF_00741"/>
    </source>
</evidence>
<gene>
    <name evidence="1" type="primary">purM</name>
    <name type="ordered locus">Noc_1182</name>
</gene>
<keyword id="KW-0067">ATP-binding</keyword>
<keyword id="KW-0963">Cytoplasm</keyword>
<keyword id="KW-0436">Ligase</keyword>
<keyword id="KW-0547">Nucleotide-binding</keyword>
<keyword id="KW-0658">Purine biosynthesis</keyword>
<keyword id="KW-1185">Reference proteome</keyword>
<name>PUR5_NITOC</name>